<accession>P84411</accession>
<organism>
    <name type="scientific">Shelfordella lateralis</name>
    <name type="common">Turkestan cockroach</name>
    <name type="synonym">Periplaneta lateralis</name>
    <dbReference type="NCBI Taxonomy" id="36981"/>
    <lineage>
        <taxon>Eukaryota</taxon>
        <taxon>Metazoa</taxon>
        <taxon>Ecdysozoa</taxon>
        <taxon>Arthropoda</taxon>
        <taxon>Hexapoda</taxon>
        <taxon>Insecta</taxon>
        <taxon>Pterygota</taxon>
        <taxon>Neoptera</taxon>
        <taxon>Polyneoptera</taxon>
        <taxon>Dictyoptera</taxon>
        <taxon>Blattodea</taxon>
        <taxon>Blattoidea</taxon>
        <taxon>Blattidae</taxon>
        <taxon>Blattinae</taxon>
        <taxon>Periplaneta</taxon>
    </lineage>
</organism>
<dbReference type="GO" id="GO:0005576">
    <property type="term" value="C:extracellular region"/>
    <property type="evidence" value="ECO:0007669"/>
    <property type="project" value="UniProtKB-SubCell"/>
</dbReference>
<dbReference type="GO" id="GO:0007218">
    <property type="term" value="P:neuropeptide signaling pathway"/>
    <property type="evidence" value="ECO:0007669"/>
    <property type="project" value="UniProtKB-KW"/>
</dbReference>
<comment type="function">
    <text evidence="1">Mediates visceral muscle contractile activity (myotropic activity).</text>
</comment>
<comment type="subcellular location">
    <subcellularLocation>
        <location evidence="4">Secreted</location>
    </subcellularLocation>
</comment>
<comment type="mass spectrometry" mass="1447.7" method="MALDI" evidence="3"/>
<comment type="similarity">
    <text evidence="2">Belongs to the pyrokinin family.</text>
</comment>
<feature type="peptide" id="PRO_0000044339" description="Pyrokinin-4">
    <location>
        <begin position="1"/>
        <end position="12"/>
    </location>
</feature>
<feature type="modified residue" description="Leucine amide" evidence="3">
    <location>
        <position position="12"/>
    </location>
</feature>
<reference evidence="4" key="1">
    <citation type="journal article" date="2005" name="Peptides">
        <title>Peptidomics of neurohemal organs from species of the cockroach family Blattidae: how do neuropeptides of closely related species differ?</title>
        <authorList>
            <person name="Predel R."/>
            <person name="Gaede G."/>
        </authorList>
    </citation>
    <scope>PROTEIN SEQUENCE</scope>
    <scope>MASS SPECTROMETRY</scope>
    <scope>AMIDATION AT LEU-12</scope>
    <source>
        <tissue evidence="3">Corpora allata</tissue>
    </source>
</reference>
<name>PPK4_SHELA</name>
<protein>
    <recommendedName>
        <fullName>Pyrokinin-4</fullName>
    </recommendedName>
    <alternativeName>
        <fullName>YXPRL-amide</fullName>
    </alternativeName>
</protein>
<proteinExistence type="evidence at protein level"/>
<keyword id="KW-0027">Amidation</keyword>
<keyword id="KW-0903">Direct protein sequencing</keyword>
<keyword id="KW-0527">Neuropeptide</keyword>
<keyword id="KW-0964">Secreted</keyword>
<evidence type="ECO:0000250" key="1">
    <source>
        <dbReference type="UniProtKB" id="P82619"/>
    </source>
</evidence>
<evidence type="ECO:0000255" key="2"/>
<evidence type="ECO:0000269" key="3">
    <source>
    </source>
</evidence>
<evidence type="ECO:0000305" key="4"/>
<sequence length="12" mass="1449">DHLPHDVYSPRL</sequence>